<accession>O50627</accession>
<accession>Q9JPZ1</accession>
<keyword id="KW-0067">ATP-binding</keyword>
<keyword id="KW-0963">Cytoplasm</keyword>
<keyword id="KW-0238">DNA-binding</keyword>
<keyword id="KW-0413">Isomerase</keyword>
<keyword id="KW-0460">Magnesium</keyword>
<keyword id="KW-0479">Metal-binding</keyword>
<keyword id="KW-0547">Nucleotide-binding</keyword>
<keyword id="KW-1185">Reference proteome</keyword>
<keyword id="KW-0799">Topoisomerase</keyword>
<proteinExistence type="inferred from homology"/>
<dbReference type="EC" id="5.6.2.2" evidence="1"/>
<dbReference type="EMBL" id="AB010081">
    <property type="protein sequence ID" value="BAA24187.1"/>
    <property type="molecule type" value="Genomic_DNA"/>
</dbReference>
<dbReference type="EMBL" id="AB013492">
    <property type="protein sequence ID" value="BAA82690.1"/>
    <property type="molecule type" value="Genomic_DNA"/>
</dbReference>
<dbReference type="EMBL" id="BA000004">
    <property type="protein sequence ID" value="BAB03725.1"/>
    <property type="molecule type" value="Genomic_DNA"/>
</dbReference>
<dbReference type="PIR" id="F83650">
    <property type="entry name" value="F83650"/>
</dbReference>
<dbReference type="PIR" id="T46551">
    <property type="entry name" value="T46551"/>
</dbReference>
<dbReference type="RefSeq" id="WP_010896190.1">
    <property type="nucleotide sequence ID" value="NC_002570.2"/>
</dbReference>
<dbReference type="SMR" id="O50627"/>
<dbReference type="STRING" id="272558.gene:10725821"/>
<dbReference type="GeneID" id="87595519"/>
<dbReference type="KEGG" id="bha:BH0006"/>
<dbReference type="eggNOG" id="COG0187">
    <property type="taxonomic scope" value="Bacteria"/>
</dbReference>
<dbReference type="HOGENOM" id="CLU_006146_1_2_9"/>
<dbReference type="OrthoDB" id="9802808at2"/>
<dbReference type="Proteomes" id="UP000001258">
    <property type="component" value="Chromosome"/>
</dbReference>
<dbReference type="GO" id="GO:0005694">
    <property type="term" value="C:chromosome"/>
    <property type="evidence" value="ECO:0007669"/>
    <property type="project" value="InterPro"/>
</dbReference>
<dbReference type="GO" id="GO:0005737">
    <property type="term" value="C:cytoplasm"/>
    <property type="evidence" value="ECO:0007669"/>
    <property type="project" value="UniProtKB-SubCell"/>
</dbReference>
<dbReference type="GO" id="GO:0005524">
    <property type="term" value="F:ATP binding"/>
    <property type="evidence" value="ECO:0007669"/>
    <property type="project" value="UniProtKB-UniRule"/>
</dbReference>
<dbReference type="GO" id="GO:0003677">
    <property type="term" value="F:DNA binding"/>
    <property type="evidence" value="ECO:0007669"/>
    <property type="project" value="UniProtKB-KW"/>
</dbReference>
<dbReference type="GO" id="GO:0034335">
    <property type="term" value="F:DNA negative supercoiling activity"/>
    <property type="evidence" value="ECO:0007669"/>
    <property type="project" value="UniProtKB-ARBA"/>
</dbReference>
<dbReference type="GO" id="GO:0046872">
    <property type="term" value="F:metal ion binding"/>
    <property type="evidence" value="ECO:0007669"/>
    <property type="project" value="UniProtKB-KW"/>
</dbReference>
<dbReference type="GO" id="GO:0006265">
    <property type="term" value="P:DNA topological change"/>
    <property type="evidence" value="ECO:0007669"/>
    <property type="project" value="UniProtKB-UniRule"/>
</dbReference>
<dbReference type="GO" id="GO:0006261">
    <property type="term" value="P:DNA-templated DNA replication"/>
    <property type="evidence" value="ECO:0007669"/>
    <property type="project" value="UniProtKB-UniRule"/>
</dbReference>
<dbReference type="CDD" id="cd16928">
    <property type="entry name" value="HATPase_GyrB-like"/>
    <property type="match status" value="1"/>
</dbReference>
<dbReference type="CDD" id="cd00822">
    <property type="entry name" value="TopoII_Trans_DNA_gyrase"/>
    <property type="match status" value="1"/>
</dbReference>
<dbReference type="CDD" id="cd03366">
    <property type="entry name" value="TOPRIM_TopoIIA_GyrB"/>
    <property type="match status" value="1"/>
</dbReference>
<dbReference type="FunFam" id="3.30.230.10:FF:000005">
    <property type="entry name" value="DNA gyrase subunit B"/>
    <property type="match status" value="1"/>
</dbReference>
<dbReference type="FunFam" id="3.30.565.10:FF:000002">
    <property type="entry name" value="DNA gyrase subunit B"/>
    <property type="match status" value="1"/>
</dbReference>
<dbReference type="FunFam" id="3.40.50.670:FF:000002">
    <property type="entry name" value="DNA gyrase subunit B"/>
    <property type="match status" value="1"/>
</dbReference>
<dbReference type="Gene3D" id="3.30.230.10">
    <property type="match status" value="1"/>
</dbReference>
<dbReference type="Gene3D" id="3.40.50.670">
    <property type="match status" value="1"/>
</dbReference>
<dbReference type="Gene3D" id="3.30.565.10">
    <property type="entry name" value="Histidine kinase-like ATPase, C-terminal domain"/>
    <property type="match status" value="1"/>
</dbReference>
<dbReference type="HAMAP" id="MF_01898">
    <property type="entry name" value="GyrB"/>
    <property type="match status" value="1"/>
</dbReference>
<dbReference type="InterPro" id="IPR002288">
    <property type="entry name" value="DNA_gyrase_B_C"/>
</dbReference>
<dbReference type="InterPro" id="IPR011557">
    <property type="entry name" value="GyrB"/>
</dbReference>
<dbReference type="InterPro" id="IPR036890">
    <property type="entry name" value="HATPase_C_sf"/>
</dbReference>
<dbReference type="InterPro" id="IPR020568">
    <property type="entry name" value="Ribosomal_Su5_D2-typ_SF"/>
</dbReference>
<dbReference type="InterPro" id="IPR014721">
    <property type="entry name" value="Ribsml_uS5_D2-typ_fold_subgr"/>
</dbReference>
<dbReference type="InterPro" id="IPR001241">
    <property type="entry name" value="Topo_IIA"/>
</dbReference>
<dbReference type="InterPro" id="IPR013760">
    <property type="entry name" value="Topo_IIA-like_dom_sf"/>
</dbReference>
<dbReference type="InterPro" id="IPR000565">
    <property type="entry name" value="Topo_IIA_B"/>
</dbReference>
<dbReference type="InterPro" id="IPR013759">
    <property type="entry name" value="Topo_IIA_B_C"/>
</dbReference>
<dbReference type="InterPro" id="IPR013506">
    <property type="entry name" value="Topo_IIA_bsu_dom2"/>
</dbReference>
<dbReference type="InterPro" id="IPR018522">
    <property type="entry name" value="TopoIIA_CS"/>
</dbReference>
<dbReference type="InterPro" id="IPR006171">
    <property type="entry name" value="TOPRIM_dom"/>
</dbReference>
<dbReference type="InterPro" id="IPR034160">
    <property type="entry name" value="TOPRIM_GyrB"/>
</dbReference>
<dbReference type="NCBIfam" id="TIGR01059">
    <property type="entry name" value="gyrB"/>
    <property type="match status" value="1"/>
</dbReference>
<dbReference type="NCBIfam" id="NF004189">
    <property type="entry name" value="PRK05644.1"/>
    <property type="match status" value="1"/>
</dbReference>
<dbReference type="NCBIfam" id="NF011501">
    <property type="entry name" value="PRK14939.1"/>
    <property type="match status" value="1"/>
</dbReference>
<dbReference type="PANTHER" id="PTHR45866:SF1">
    <property type="entry name" value="DNA GYRASE SUBUNIT B, MITOCHONDRIAL"/>
    <property type="match status" value="1"/>
</dbReference>
<dbReference type="PANTHER" id="PTHR45866">
    <property type="entry name" value="DNA GYRASE/TOPOISOMERASE SUBUNIT B"/>
    <property type="match status" value="1"/>
</dbReference>
<dbReference type="Pfam" id="PF00204">
    <property type="entry name" value="DNA_gyraseB"/>
    <property type="match status" value="1"/>
</dbReference>
<dbReference type="Pfam" id="PF00986">
    <property type="entry name" value="DNA_gyraseB_C"/>
    <property type="match status" value="1"/>
</dbReference>
<dbReference type="Pfam" id="PF02518">
    <property type="entry name" value="HATPase_c"/>
    <property type="match status" value="1"/>
</dbReference>
<dbReference type="Pfam" id="PF01751">
    <property type="entry name" value="Toprim"/>
    <property type="match status" value="1"/>
</dbReference>
<dbReference type="PRINTS" id="PR01159">
    <property type="entry name" value="DNAGYRASEB"/>
</dbReference>
<dbReference type="PRINTS" id="PR00418">
    <property type="entry name" value="TPI2FAMILY"/>
</dbReference>
<dbReference type="SMART" id="SM00387">
    <property type="entry name" value="HATPase_c"/>
    <property type="match status" value="1"/>
</dbReference>
<dbReference type="SMART" id="SM00433">
    <property type="entry name" value="TOP2c"/>
    <property type="match status" value="1"/>
</dbReference>
<dbReference type="SUPFAM" id="SSF55874">
    <property type="entry name" value="ATPase domain of HSP90 chaperone/DNA topoisomerase II/histidine kinase"/>
    <property type="match status" value="1"/>
</dbReference>
<dbReference type="SUPFAM" id="SSF54211">
    <property type="entry name" value="Ribosomal protein S5 domain 2-like"/>
    <property type="match status" value="1"/>
</dbReference>
<dbReference type="SUPFAM" id="SSF56719">
    <property type="entry name" value="Type II DNA topoisomerase"/>
    <property type="match status" value="1"/>
</dbReference>
<dbReference type="PROSITE" id="PS00177">
    <property type="entry name" value="TOPOISOMERASE_II"/>
    <property type="match status" value="1"/>
</dbReference>
<dbReference type="PROSITE" id="PS50880">
    <property type="entry name" value="TOPRIM"/>
    <property type="match status" value="1"/>
</dbReference>
<gene>
    <name evidence="1" type="primary">gyrB</name>
    <name type="ordered locus">BH0006</name>
</gene>
<evidence type="ECO:0000255" key="1">
    <source>
        <dbReference type="HAMAP-Rule" id="MF_01898"/>
    </source>
</evidence>
<feature type="chain" id="PRO_0000145292" description="DNA gyrase subunit B">
    <location>
        <begin position="1"/>
        <end position="637"/>
    </location>
</feature>
<feature type="domain" description="Toprim" evidence="1">
    <location>
        <begin position="421"/>
        <end position="535"/>
    </location>
</feature>
<feature type="binding site" evidence="1">
    <location>
        <position position="427"/>
    </location>
    <ligand>
        <name>Mg(2+)</name>
        <dbReference type="ChEBI" id="CHEBI:18420"/>
        <label>1</label>
        <note>catalytic</note>
    </ligand>
</feature>
<feature type="binding site" evidence="1">
    <location>
        <position position="500"/>
    </location>
    <ligand>
        <name>Mg(2+)</name>
        <dbReference type="ChEBI" id="CHEBI:18420"/>
        <label>1</label>
        <note>catalytic</note>
    </ligand>
</feature>
<feature type="binding site" evidence="1">
    <location>
        <position position="500"/>
    </location>
    <ligand>
        <name>Mg(2+)</name>
        <dbReference type="ChEBI" id="CHEBI:18420"/>
        <label>2</label>
    </ligand>
</feature>
<feature type="binding site" evidence="1">
    <location>
        <position position="502"/>
    </location>
    <ligand>
        <name>Mg(2+)</name>
        <dbReference type="ChEBI" id="CHEBI:18420"/>
        <label>2</label>
    </ligand>
</feature>
<feature type="site" description="Interaction with DNA" evidence="1">
    <location>
        <position position="452"/>
    </location>
</feature>
<feature type="site" description="Interaction with DNA" evidence="1">
    <location>
        <position position="455"/>
    </location>
</feature>
<comment type="function">
    <text evidence="1">A type II topoisomerase that negatively supercoils closed circular double-stranded (ds) DNA in an ATP-dependent manner to modulate DNA topology and maintain chromosomes in an underwound state. Negative supercoiling favors strand separation, and DNA replication, transcription, recombination and repair, all of which involve strand separation. Also able to catalyze the interconversion of other topological isomers of dsDNA rings, including catenanes and knotted rings. Type II topoisomerases break and join 2 DNA strands simultaneously in an ATP-dependent manner.</text>
</comment>
<comment type="catalytic activity">
    <reaction evidence="1">
        <text>ATP-dependent breakage, passage and rejoining of double-stranded DNA.</text>
        <dbReference type="EC" id="5.6.2.2"/>
    </reaction>
</comment>
<comment type="cofactor">
    <cofactor evidence="1">
        <name>Mg(2+)</name>
        <dbReference type="ChEBI" id="CHEBI:18420"/>
    </cofactor>
    <cofactor evidence="1">
        <name>Mn(2+)</name>
        <dbReference type="ChEBI" id="CHEBI:29035"/>
    </cofactor>
    <cofactor evidence="1">
        <name>Ca(2+)</name>
        <dbReference type="ChEBI" id="CHEBI:29108"/>
    </cofactor>
    <text evidence="1">Binds two Mg(2+) per subunit. The magnesium ions form salt bridges with both the protein and the DNA. Can also accept other divalent metal cations, such as Mn(2+) or Ca(2+).</text>
</comment>
<comment type="subunit">
    <text evidence="1">Heterotetramer, composed of two GyrA and two GyrB chains. In the heterotetramer, GyrA contains the active site tyrosine that forms a transient covalent intermediate with DNA, while GyrB binds cofactors and catalyzes ATP hydrolysis.</text>
</comment>
<comment type="subcellular location">
    <subcellularLocation>
        <location evidence="1">Cytoplasm</location>
    </subcellularLocation>
</comment>
<comment type="miscellaneous">
    <text evidence="1">Few gyrases are as efficient as E.coli at forming negative supercoils. Not all organisms have 2 type II topoisomerases; in organisms with a single type II topoisomerase this enzyme also has to decatenate newly replicated chromosomes.</text>
</comment>
<comment type="similarity">
    <text evidence="1">Belongs to the type II topoisomerase GyrB family.</text>
</comment>
<name>GYRB_HALH5</name>
<sequence>MTREQQAYDESQIQVLEGLEAVRKRPGMYIGSTSSRGLHHLVWEIVDNSIDEAMAGFCDEIGVVIEEDNSITVTDNGRGIPVGIHEKMGRPAVEVIMTVLHAGGKFGGGGYKVSGGLHGVGASVVNALSTMLEVEVHREGKVHYQKFHRGVPAADLEVIGTTDRTGTKIHFKPDGDIFTETTVFEYDTLASRLRELAFLNKGLRIKITDMREEEKSDEFHYEGGIASFVEHLNRTRETLHETPIHIEGEKQGVYVEIAVQYNDGFTSNIYSFANNINTHEGGTHESGFKTGLTRVINDYARKHNLFKESDPNLTGEDVREGLTAIISVKIPDPQFEGQTKTKLGNSEARTITDSLFTEHFSRFLIEHPQVARKLVDKGLMASRAREAAKKARELTRRKSALEVSSLPGKLADCSSRDASISEIYIVEGDSAGGSAKQGRDRHFQAILPLRGKILNVEKARLDKILANNEIRAIITALGTGIGDDFDIEKARYHKIIIMTDADVDGAHIRTLILTFFYRYMRPLIEHGYVYIAQPPLYKVQQGKDIQYAYGDAELQEILSQLPDKAKPGIQRYKGLGEMNPSQLWETTMDPGQRTVLQVTLEDAMKADEIFEILMGDRVEPRRDFIQENARYVKNLDI</sequence>
<reference key="1">
    <citation type="submission" date="1997-12" db="EMBL/GenBank/DDBJ databases">
        <title>Cloning and expression of the genes encoding DNA gyrase from alkaliphilic Bacillus sp. strain C-125.</title>
        <authorList>
            <person name="Masui N."/>
            <person name="Nakasone K."/>
            <person name="Horikoshi K."/>
        </authorList>
    </citation>
    <scope>NUCLEOTIDE SEQUENCE [GENOMIC DNA]</scope>
    <source>
        <strain>ATCC BAA-125 / DSM 18197 / FERM 7344 / JCM 9153 / C-125</strain>
    </source>
</reference>
<reference key="2">
    <citation type="journal article" date="1999" name="Biosci. Biotechnol. Biochem.">
        <title>Replication origin region of the chromosome of alkaliphilic Bacillus halodurans C-125.</title>
        <authorList>
            <person name="Takami H."/>
            <person name="Masui N."/>
            <person name="Nakasone K."/>
            <person name="Horikoshi K."/>
        </authorList>
    </citation>
    <scope>NUCLEOTIDE SEQUENCE [GENOMIC DNA]</scope>
    <source>
        <strain>ATCC BAA-125 / DSM 18197 / FERM 7344 / JCM 9153 / C-125</strain>
    </source>
</reference>
<reference key="3">
    <citation type="journal article" date="2000" name="Nucleic Acids Res.">
        <title>Complete genome sequence of the alkaliphilic bacterium Bacillus halodurans and genomic sequence comparison with Bacillus subtilis.</title>
        <authorList>
            <person name="Takami H."/>
            <person name="Nakasone K."/>
            <person name="Takaki Y."/>
            <person name="Maeno G."/>
            <person name="Sasaki R."/>
            <person name="Masui N."/>
            <person name="Fuji F."/>
            <person name="Hirama C."/>
            <person name="Nakamura Y."/>
            <person name="Ogasawara N."/>
            <person name="Kuhara S."/>
            <person name="Horikoshi K."/>
        </authorList>
    </citation>
    <scope>NUCLEOTIDE SEQUENCE [LARGE SCALE GENOMIC DNA]</scope>
    <source>
        <strain>ATCC BAA-125 / DSM 18197 / FERM 7344 / JCM 9153 / C-125</strain>
    </source>
</reference>
<organism>
    <name type="scientific">Halalkalibacterium halodurans (strain ATCC BAA-125 / DSM 18197 / FERM 7344 / JCM 9153 / C-125)</name>
    <name type="common">Bacillus halodurans</name>
    <dbReference type="NCBI Taxonomy" id="272558"/>
    <lineage>
        <taxon>Bacteria</taxon>
        <taxon>Bacillati</taxon>
        <taxon>Bacillota</taxon>
        <taxon>Bacilli</taxon>
        <taxon>Bacillales</taxon>
        <taxon>Bacillaceae</taxon>
        <taxon>Halalkalibacterium (ex Joshi et al. 2022)</taxon>
    </lineage>
</organism>
<protein>
    <recommendedName>
        <fullName evidence="1">DNA gyrase subunit B</fullName>
        <ecNumber evidence="1">5.6.2.2</ecNumber>
    </recommendedName>
</protein>